<keyword id="KW-0002">3D-structure</keyword>
<keyword id="KW-0963">Cytoplasm</keyword>
<keyword id="KW-0539">Nucleus</keyword>
<keyword id="KW-1185">Reference proteome</keyword>
<keyword id="KW-0736">Signalosome</keyword>
<keyword id="KW-0804">Transcription</keyword>
<evidence type="ECO:0000255" key="1">
    <source>
        <dbReference type="PROSITE-ProRule" id="PRU01185"/>
    </source>
</evidence>
<evidence type="ECO:0000269" key="2">
    <source>
    </source>
</evidence>
<evidence type="ECO:0000269" key="3">
    <source>
    </source>
</evidence>
<evidence type="ECO:0000269" key="4">
    <source>
    </source>
</evidence>
<evidence type="ECO:0000269" key="5">
    <source>
    </source>
</evidence>
<evidence type="ECO:0000269" key="6">
    <source>
    </source>
</evidence>
<evidence type="ECO:0000269" key="7">
    <source>
    </source>
</evidence>
<evidence type="ECO:0000269" key="8">
    <source>
    </source>
</evidence>
<evidence type="ECO:0000305" key="9"/>
<evidence type="ECO:0007829" key="10">
    <source>
        <dbReference type="PDB" id="7EWF"/>
    </source>
</evidence>
<evidence type="ECO:0007829" key="11">
    <source>
        <dbReference type="PDB" id="7EWM"/>
    </source>
</evidence>
<dbReference type="EMBL" id="Z49584">
    <property type="protein sequence ID" value="CAA89611.1"/>
    <property type="molecule type" value="Genomic_DNA"/>
</dbReference>
<dbReference type="EMBL" id="L47993">
    <property type="protein sequence ID" value="AAB39307.1"/>
    <property type="molecule type" value="Genomic_DNA"/>
</dbReference>
<dbReference type="EMBL" id="BK006943">
    <property type="protein sequence ID" value="DAA08869.1"/>
    <property type="molecule type" value="Genomic_DNA"/>
</dbReference>
<dbReference type="PIR" id="S57103">
    <property type="entry name" value="S57103"/>
</dbReference>
<dbReference type="RefSeq" id="NP_012617.1">
    <property type="nucleotide sequence ID" value="NM_001181741.1"/>
</dbReference>
<dbReference type="PDB" id="7EWF">
    <property type="method" value="X-ray"/>
    <property type="resolution" value="2.85 A"/>
    <property type="chains" value="B=1-423"/>
</dbReference>
<dbReference type="PDB" id="7EWM">
    <property type="method" value="X-ray"/>
    <property type="resolution" value="2.90 A"/>
    <property type="chains" value="B=1-423"/>
</dbReference>
<dbReference type="PDBsum" id="7EWF"/>
<dbReference type="PDBsum" id="7EWM"/>
<dbReference type="SMR" id="P47130"/>
<dbReference type="BioGRID" id="33839">
    <property type="interactions" value="629"/>
</dbReference>
<dbReference type="ComplexPortal" id="CPX-1894">
    <property type="entry name" value="COP9 signalosome complex"/>
</dbReference>
<dbReference type="DIP" id="DIP-6710N"/>
<dbReference type="FunCoup" id="P47130">
    <property type="interactions" value="1039"/>
</dbReference>
<dbReference type="IntAct" id="P47130">
    <property type="interactions" value="10"/>
</dbReference>
<dbReference type="MINT" id="P47130"/>
<dbReference type="STRING" id="4932.YJR084W"/>
<dbReference type="iPTMnet" id="P47130"/>
<dbReference type="PaxDb" id="4932-YJR084W"/>
<dbReference type="PeptideAtlas" id="P47130"/>
<dbReference type="EnsemblFungi" id="YJR084W_mRNA">
    <property type="protein sequence ID" value="YJR084W"/>
    <property type="gene ID" value="YJR084W"/>
</dbReference>
<dbReference type="GeneID" id="853546"/>
<dbReference type="KEGG" id="sce:YJR084W"/>
<dbReference type="AGR" id="SGD:S000003844"/>
<dbReference type="SGD" id="S000003844">
    <property type="gene designation" value="YJR084W"/>
</dbReference>
<dbReference type="VEuPathDB" id="FungiDB:YJR084W"/>
<dbReference type="eggNOG" id="KOG2688">
    <property type="taxonomic scope" value="Eukaryota"/>
</dbReference>
<dbReference type="GeneTree" id="ENSGT00390000001101"/>
<dbReference type="HOGENOM" id="CLU_031567_2_1_1"/>
<dbReference type="InParanoid" id="P47130"/>
<dbReference type="OMA" id="INRMFTL"/>
<dbReference type="OrthoDB" id="10252687at2759"/>
<dbReference type="BioCyc" id="YEAST:G3O-31712-MONOMER"/>
<dbReference type="BioGRID-ORCS" id="853546">
    <property type="hits" value="1 hit in 10 CRISPR screens"/>
</dbReference>
<dbReference type="PRO" id="PR:P47130"/>
<dbReference type="Proteomes" id="UP000002311">
    <property type="component" value="Chromosome X"/>
</dbReference>
<dbReference type="RNAct" id="P47130">
    <property type="molecule type" value="protein"/>
</dbReference>
<dbReference type="GO" id="GO:0008180">
    <property type="term" value="C:COP9 signalosome"/>
    <property type="evidence" value="ECO:0000303"/>
    <property type="project" value="ComplexPortal"/>
</dbReference>
<dbReference type="GO" id="GO:0005737">
    <property type="term" value="C:cytoplasm"/>
    <property type="evidence" value="ECO:0007669"/>
    <property type="project" value="UniProtKB-SubCell"/>
</dbReference>
<dbReference type="GO" id="GO:0000791">
    <property type="term" value="C:euchromatin"/>
    <property type="evidence" value="ECO:0000314"/>
    <property type="project" value="SGD"/>
</dbReference>
<dbReference type="GO" id="GO:0005634">
    <property type="term" value="C:nucleus"/>
    <property type="evidence" value="ECO:0000303"/>
    <property type="project" value="ComplexPortal"/>
</dbReference>
<dbReference type="GO" id="GO:0003690">
    <property type="term" value="F:double-stranded DNA binding"/>
    <property type="evidence" value="ECO:0000318"/>
    <property type="project" value="GO_Central"/>
</dbReference>
<dbReference type="GO" id="GO:0003723">
    <property type="term" value="F:RNA binding"/>
    <property type="evidence" value="ECO:0000318"/>
    <property type="project" value="GO_Central"/>
</dbReference>
<dbReference type="GO" id="GO:0000754">
    <property type="term" value="P:adaptation of signaling pathway by response to pheromone involved in conjugation with cellular fusion"/>
    <property type="evidence" value="ECO:0000303"/>
    <property type="project" value="ComplexPortal"/>
</dbReference>
<dbReference type="GO" id="GO:0071444">
    <property type="term" value="P:cellular response to pheromone"/>
    <property type="evidence" value="ECO:0000315"/>
    <property type="project" value="SGD"/>
</dbReference>
<dbReference type="GO" id="GO:0000747">
    <property type="term" value="P:conjugation with cellular fusion"/>
    <property type="evidence" value="ECO:0000315"/>
    <property type="project" value="SGD"/>
</dbReference>
<dbReference type="GO" id="GO:0000398">
    <property type="term" value="P:mRNA splicing, via spliceosome"/>
    <property type="evidence" value="ECO:0000315"/>
    <property type="project" value="SGD"/>
</dbReference>
<dbReference type="GO" id="GO:2000434">
    <property type="term" value="P:regulation of protein neddylation"/>
    <property type="evidence" value="ECO:0000303"/>
    <property type="project" value="ComplexPortal"/>
</dbReference>
<dbReference type="Gene3D" id="1.10.10.10">
    <property type="entry name" value="Winged helix-like DNA-binding domain superfamily/Winged helix DNA-binding domain"/>
    <property type="match status" value="1"/>
</dbReference>
<dbReference type="InterPro" id="IPR045114">
    <property type="entry name" value="Csn12-like"/>
</dbReference>
<dbReference type="InterPro" id="IPR000717">
    <property type="entry name" value="PCI_dom"/>
</dbReference>
<dbReference type="InterPro" id="IPR036388">
    <property type="entry name" value="WH-like_DNA-bd_sf"/>
</dbReference>
<dbReference type="PANTHER" id="PTHR12732:SF0">
    <property type="entry name" value="PCI DOMAIN-CONTAINING PROTEIN 2"/>
    <property type="match status" value="1"/>
</dbReference>
<dbReference type="PANTHER" id="PTHR12732">
    <property type="entry name" value="UNCHARACTERIZED PROTEASOME COMPONENT REGION PCI-CONTAINING"/>
    <property type="match status" value="1"/>
</dbReference>
<dbReference type="Pfam" id="PF01399">
    <property type="entry name" value="PCI"/>
    <property type="match status" value="1"/>
</dbReference>
<dbReference type="SMART" id="SM00753">
    <property type="entry name" value="PAM"/>
    <property type="match status" value="1"/>
</dbReference>
<dbReference type="PROSITE" id="PS50250">
    <property type="entry name" value="PCI"/>
    <property type="match status" value="1"/>
</dbReference>
<proteinExistence type="evidence at protein level"/>
<comment type="function">
    <text evidence="2 6 7 8">Component of the COP9 signalosome (CSN) complex that acts as an regulator of the ubiquitin (Ubl) conjugation pathway by mediating the deneddylation of the cullin subunit of SCF-type E3 ubiquitin-protein ligase complexes. The CSN complex is involved in the regulation of the mating pheromone response. CSN12 forms a complex with THP3 that is recruited to transcribed genes and required for transcription elongation.</text>
</comment>
<comment type="subunit">
    <text evidence="2 3 6 7 8">Component of a COP9 signalosome-like (CSN) complex, composed of RRI1/CSN5, CSN9, RRI2/CSN10, PCI8/CSN11, CSN12 and CSI1. In the complex, it probably interacts directly with RRI1/CSN5, CSN9, RRI2/CSN10 and CSI1. Interacts with SEM1 and THP3.</text>
</comment>
<comment type="interaction">
    <interactant intactId="EBI-763">
        <id>P47130</id>
    </interactant>
    <interactant intactId="EBI-37511">
        <id>Q12468</id>
        <label>RRI1</label>
    </interactant>
    <organismsDiffer>false</organismsDiffer>
    <experiments>3</experiments>
</comment>
<comment type="interaction">
    <interactant intactId="EBI-763">
        <id>P47130</id>
    </interactant>
    <interactant intactId="EBI-34263">
        <id>Q12049</id>
        <label>THP3</label>
    </interactant>
    <organismsDiffer>false</organismsDiffer>
    <experiments>3</experiments>
</comment>
<comment type="subcellular location">
    <subcellularLocation>
        <location evidence="4">Cytoplasm</location>
    </subcellularLocation>
    <subcellularLocation>
        <location evidence="4">Nucleus</location>
    </subcellularLocation>
</comment>
<comment type="miscellaneous">
    <text evidence="5">Present with 1510 molecules/cell in log phase SD medium.</text>
</comment>
<comment type="similarity">
    <text evidence="9">Belongs to the CSN12 family.</text>
</comment>
<reference key="1">
    <citation type="journal article" date="1996" name="Yeast">
        <title>Analysis of a 62 kb DNA sequence of chromosome X reveals 36 open reading frames and a gene cluster with a counterpart on chromosome XI.</title>
        <authorList>
            <person name="Huang M.-E."/>
            <person name="Manus V."/>
            <person name="Chuat J.-C."/>
            <person name="Galibert F."/>
        </authorList>
    </citation>
    <scope>NUCLEOTIDE SEQUENCE [GENOMIC DNA]</scope>
    <source>
        <strain>ATCC 204508 / S288c</strain>
    </source>
</reference>
<reference key="2">
    <citation type="journal article" date="1996" name="EMBO J.">
        <title>Complete nucleotide sequence of Saccharomyces cerevisiae chromosome X.</title>
        <authorList>
            <person name="Galibert F."/>
            <person name="Alexandraki D."/>
            <person name="Baur A."/>
            <person name="Boles E."/>
            <person name="Chalwatzis N."/>
            <person name="Chuat J.-C."/>
            <person name="Coster F."/>
            <person name="Cziepluch C."/>
            <person name="de Haan M."/>
            <person name="Domdey H."/>
            <person name="Durand P."/>
            <person name="Entian K.-D."/>
            <person name="Gatius M."/>
            <person name="Goffeau A."/>
            <person name="Grivell L.A."/>
            <person name="Hennemann A."/>
            <person name="Herbert C.J."/>
            <person name="Heumann K."/>
            <person name="Hilger F."/>
            <person name="Hollenberg C.P."/>
            <person name="Huang M.-E."/>
            <person name="Jacq C."/>
            <person name="Jauniaux J.-C."/>
            <person name="Katsoulou C."/>
            <person name="Kirchrath L."/>
            <person name="Kleine K."/>
            <person name="Kordes E."/>
            <person name="Koetter P."/>
            <person name="Liebl S."/>
            <person name="Louis E.J."/>
            <person name="Manus V."/>
            <person name="Mewes H.-W."/>
            <person name="Miosga T."/>
            <person name="Obermaier B."/>
            <person name="Perea J."/>
            <person name="Pohl T.M."/>
            <person name="Portetelle D."/>
            <person name="Pujol A."/>
            <person name="Purnelle B."/>
            <person name="Ramezani Rad M."/>
            <person name="Rasmussen S.W."/>
            <person name="Rose M."/>
            <person name="Rossau R."/>
            <person name="Schaaff-Gerstenschlaeger I."/>
            <person name="Smits P.H.M."/>
            <person name="Scarcez T."/>
            <person name="Soriano N."/>
            <person name="To Van D."/>
            <person name="Tzermia M."/>
            <person name="Van Broekhoven A."/>
            <person name="Vandenbol M."/>
            <person name="Wedler H."/>
            <person name="von Wettstein D."/>
            <person name="Wambutt R."/>
            <person name="Zagulski M."/>
            <person name="Zollner A."/>
            <person name="Karpfinger-Hartl L."/>
        </authorList>
    </citation>
    <scope>NUCLEOTIDE SEQUENCE [LARGE SCALE GENOMIC DNA]</scope>
    <source>
        <strain>ATCC 204508 / S288c</strain>
    </source>
</reference>
<reference key="3">
    <citation type="journal article" date="2014" name="G3 (Bethesda)">
        <title>The reference genome sequence of Saccharomyces cerevisiae: Then and now.</title>
        <authorList>
            <person name="Engel S.R."/>
            <person name="Dietrich F.S."/>
            <person name="Fisk D.G."/>
            <person name="Binkley G."/>
            <person name="Balakrishnan R."/>
            <person name="Costanzo M.C."/>
            <person name="Dwight S.S."/>
            <person name="Hitz B.C."/>
            <person name="Karra K."/>
            <person name="Nash R.S."/>
            <person name="Weng S."/>
            <person name="Wong E.D."/>
            <person name="Lloyd P."/>
            <person name="Skrzypek M.S."/>
            <person name="Miyasato S.R."/>
            <person name="Simison M."/>
            <person name="Cherry J.M."/>
        </authorList>
    </citation>
    <scope>GENOME REANNOTATION</scope>
    <source>
        <strain>ATCC 204508 / S288c</strain>
    </source>
</reference>
<reference key="4">
    <citation type="journal article" date="2002" name="EMBO Rep.">
        <title>COP9 signalosome components play a role in the mating pheromone response of S. cerevisiae.</title>
        <authorList>
            <person name="Maytal-Kivity V."/>
            <person name="Piran R."/>
            <person name="Pick E."/>
            <person name="Hofmann K."/>
            <person name="Glickman M.H."/>
        </authorList>
    </citation>
    <scope>INTERACTION WITH RRI1; CSN9; RRI2 AND CSI1</scope>
    <scope>IDENTIFICATION IN THE COP9 SIGNALOSOME COMPLEX</scope>
    <scope>FUNCTION OF THE COP9 SIGNALOSOME COMPLEX</scope>
</reference>
<reference key="5">
    <citation type="journal article" date="2003" name="Int. J. Biochem. Cell Biol.">
        <title>The COP9 signalosome-like complex in S. cerevisiae and links to other PCI complexes.</title>
        <authorList>
            <person name="Maytal-Kivity V."/>
            <person name="Pick E."/>
            <person name="Piran R."/>
            <person name="Hofmann K."/>
            <person name="Glickman M.H."/>
        </authorList>
    </citation>
    <scope>INTERACTION WITH RRI1/CSN5; CSN9; RRI2/CSN10 AND CSI1</scope>
    <scope>IDENTIFICATION IN THE COP9 SIGNALOSOME COMPLEX</scope>
</reference>
<reference key="6">
    <citation type="journal article" date="2008" name="Mol. Cell">
        <title>A genetic interaction map of RNA-processing factors reveals links between Sem1/Dss1-containing complexes and mRNA export and splicing.</title>
        <authorList>
            <person name="Wilmes G.M."/>
            <person name="Bergkessel M."/>
            <person name="Bandyopadhyay S."/>
            <person name="Shales M."/>
            <person name="Braberg H."/>
            <person name="Cagney G."/>
            <person name="Collins S.R."/>
            <person name="Whitworth G.B."/>
            <person name="Kress T.L."/>
            <person name="Weissman J.S."/>
            <person name="Ideker T."/>
            <person name="Guthrie C."/>
            <person name="Krogan N.J."/>
        </authorList>
    </citation>
    <scope>FUNCTION</scope>
    <scope>INTERACTION WITH SEM1 AND THP3</scope>
</reference>
<reference key="7">
    <citation type="journal article" date="2003" name="Nature">
        <title>Global analysis of protein localization in budding yeast.</title>
        <authorList>
            <person name="Huh W.-K."/>
            <person name="Falvo J.V."/>
            <person name="Gerke L.C."/>
            <person name="Carroll A.S."/>
            <person name="Howson R.W."/>
            <person name="Weissman J.S."/>
            <person name="O'Shea E.K."/>
        </authorList>
    </citation>
    <scope>SUBCELLULAR LOCATION [LARGE SCALE ANALYSIS]</scope>
</reference>
<reference key="8">
    <citation type="journal article" date="2009" name="J. Cell Biol.">
        <title>Sem1 is a functional component of the nuclear pore complex-associated messenger RNA export machinery.</title>
        <authorList>
            <person name="Faza M.B."/>
            <person name="Kemmler S."/>
            <person name="Jimeno S."/>
            <person name="Gonzalez-Aguilera C."/>
            <person name="Aguilera A."/>
            <person name="Hurt E."/>
            <person name="Panse V.G."/>
        </authorList>
    </citation>
    <scope>FUNCTION</scope>
    <scope>INTERACTION WITH SEM1 AND THP3</scope>
</reference>
<reference key="9">
    <citation type="journal article" date="2011" name="Mol. Cell. Biol.">
        <title>New suppressors of THO mutations identify Thp3 (Ypr045c)-Csn12 as a protein complex involved in transcription elongation.</title>
        <authorList>
            <person name="Jimeno S."/>
            <person name="Tous C."/>
            <person name="Garcia-Rubio M.L."/>
            <person name="Ranes M."/>
            <person name="Gonzalez-Aguilera C."/>
            <person name="Marin A."/>
            <person name="Aguilera A."/>
        </authorList>
    </citation>
    <scope>FUNCTION</scope>
    <scope>INTERACTION WITH THP3</scope>
</reference>
<reference key="10">
    <citation type="journal article" date="2003" name="Nature">
        <title>Global analysis of protein expression in yeast.</title>
        <authorList>
            <person name="Ghaemmaghami S."/>
            <person name="Huh W.-K."/>
            <person name="Bower K."/>
            <person name="Howson R.W."/>
            <person name="Belle A."/>
            <person name="Dephoure N."/>
            <person name="O'Shea E.K."/>
            <person name="Weissman J.S."/>
        </authorList>
    </citation>
    <scope>LEVEL OF PROTEIN EXPRESSION [LARGE SCALE ANALYSIS]</scope>
</reference>
<accession>P47130</accession>
<accession>D6VWQ3</accession>
<sequence>MDVDIGCYFEEKRYDDKLLDFIRYDVKTPKKTKYILQRPTATDEESVRLQRFYQLGVDLKLKYSKRRSLKKQGRIKNATEELLRLANEQLKLFNRIVERETNWIIYPLWVMAKQLIRLANESSELNKDSIEECGRTIHRSFTICLNDRNPRLNENKKIGCYMFANLEFSIYHRLSNKDMIKNLVKVLESRVNARDIPPLNKSLAMEHKSQVVLYNYYLGQYYGCLENDHERGFFHLNEALLQCPMLYVESTGKFVLQGQMEKIMILLVPLALLTKRLYPHWDHPVIAGVITRSKRLSQVYPTLVRSVISGNLSLYEATAASHERFFLSQGLHVVITLLREVVFTRLVQRCWQWGNDRKSIMPLKILLATKQHDSSANEDEEEQLDALECRLASAIASGLLRAYLSHSNRCIVFSKKEPFPHSK</sequence>
<gene>
    <name type="primary">CSN12</name>
    <name type="ordered locus">YJR084W</name>
    <name type="ORF">J1860</name>
</gene>
<organism>
    <name type="scientific">Saccharomyces cerevisiae (strain ATCC 204508 / S288c)</name>
    <name type="common">Baker's yeast</name>
    <dbReference type="NCBI Taxonomy" id="559292"/>
    <lineage>
        <taxon>Eukaryota</taxon>
        <taxon>Fungi</taxon>
        <taxon>Dikarya</taxon>
        <taxon>Ascomycota</taxon>
        <taxon>Saccharomycotina</taxon>
        <taxon>Saccharomycetes</taxon>
        <taxon>Saccharomycetales</taxon>
        <taxon>Saccharomycetaceae</taxon>
        <taxon>Saccharomyces</taxon>
    </lineage>
</organism>
<name>CSN12_YEAST</name>
<protein>
    <recommendedName>
        <fullName>Cop9 signalosome complex subunit 12</fullName>
    </recommendedName>
</protein>
<feature type="chain" id="PRO_0000121047" description="Cop9 signalosome complex subunit 12">
    <location>
        <begin position="1"/>
        <end position="423"/>
    </location>
</feature>
<feature type="domain" description="PCI" evidence="1">
    <location>
        <begin position="232"/>
        <end position="418"/>
    </location>
</feature>
<feature type="helix" evidence="10">
    <location>
        <begin position="7"/>
        <end position="10"/>
    </location>
</feature>
<feature type="helix" evidence="10">
    <location>
        <begin position="16"/>
        <end position="22"/>
    </location>
</feature>
<feature type="strand" evidence="11">
    <location>
        <begin position="24"/>
        <end position="26"/>
    </location>
</feature>
<feature type="helix" evidence="10">
    <location>
        <begin position="44"/>
        <end position="67"/>
    </location>
</feature>
<feature type="helix" evidence="10">
    <location>
        <begin position="76"/>
        <end position="97"/>
    </location>
</feature>
<feature type="helix" evidence="10">
    <location>
        <begin position="102"/>
        <end position="104"/>
    </location>
</feature>
<feature type="helix" evidence="10">
    <location>
        <begin position="105"/>
        <end position="121"/>
    </location>
</feature>
<feature type="strand" evidence="10">
    <location>
        <begin position="125"/>
        <end position="127"/>
    </location>
</feature>
<feature type="helix" evidence="10">
    <location>
        <begin position="130"/>
        <end position="145"/>
    </location>
</feature>
<feature type="turn" evidence="11">
    <location>
        <begin position="152"/>
        <end position="154"/>
    </location>
</feature>
<feature type="helix" evidence="10">
    <location>
        <begin position="157"/>
        <end position="159"/>
    </location>
</feature>
<feature type="helix" evidence="10">
    <location>
        <begin position="160"/>
        <end position="173"/>
    </location>
</feature>
<feature type="helix" evidence="10">
    <location>
        <begin position="177"/>
        <end position="192"/>
    </location>
</feature>
<feature type="helix" evidence="10">
    <location>
        <begin position="199"/>
        <end position="201"/>
    </location>
</feature>
<feature type="helix" evidence="10">
    <location>
        <begin position="203"/>
        <end position="205"/>
    </location>
</feature>
<feature type="helix" evidence="10">
    <location>
        <begin position="209"/>
        <end position="224"/>
    </location>
</feature>
<feature type="helix" evidence="10">
    <location>
        <begin position="229"/>
        <end position="241"/>
    </location>
</feature>
<feature type="strand" evidence="11">
    <location>
        <begin position="243"/>
        <end position="245"/>
    </location>
</feature>
<feature type="turn" evidence="10">
    <location>
        <begin position="249"/>
        <end position="251"/>
    </location>
</feature>
<feature type="helix" evidence="10">
    <location>
        <begin position="257"/>
        <end position="275"/>
    </location>
</feature>
<feature type="helix" evidence="10">
    <location>
        <begin position="284"/>
        <end position="290"/>
    </location>
</feature>
<feature type="helix" evidence="10">
    <location>
        <begin position="294"/>
        <end position="309"/>
    </location>
</feature>
<feature type="helix" evidence="10">
    <location>
        <begin position="312"/>
        <end position="321"/>
    </location>
</feature>
<feature type="helix" evidence="10">
    <location>
        <begin position="323"/>
        <end position="328"/>
    </location>
</feature>
<feature type="helix" evidence="10">
    <location>
        <begin position="332"/>
        <end position="354"/>
    </location>
</feature>
<feature type="strand" evidence="10">
    <location>
        <begin position="359"/>
        <end position="362"/>
    </location>
</feature>
<feature type="helix" evidence="10">
    <location>
        <begin position="363"/>
        <end position="365"/>
    </location>
</feature>
<feature type="helix" evidence="10">
    <location>
        <begin position="379"/>
        <end position="396"/>
    </location>
</feature>
<feature type="strand" evidence="10">
    <location>
        <begin position="402"/>
        <end position="405"/>
    </location>
</feature>
<feature type="turn" evidence="10">
    <location>
        <begin position="406"/>
        <end position="409"/>
    </location>
</feature>
<feature type="strand" evidence="10">
    <location>
        <begin position="410"/>
        <end position="413"/>
    </location>
</feature>
<feature type="strand" evidence="11">
    <location>
        <begin position="415"/>
        <end position="417"/>
    </location>
</feature>